<reference key="1">
    <citation type="submission" date="2006-08" db="EMBL/GenBank/DDBJ databases">
        <title>Complete sequence of Maricaulis maris MCS10.</title>
        <authorList>
            <consortium name="US DOE Joint Genome Institute"/>
            <person name="Copeland A."/>
            <person name="Lucas S."/>
            <person name="Lapidus A."/>
            <person name="Barry K."/>
            <person name="Detter J.C."/>
            <person name="Glavina del Rio T."/>
            <person name="Hammon N."/>
            <person name="Israni S."/>
            <person name="Dalin E."/>
            <person name="Tice H."/>
            <person name="Pitluck S."/>
            <person name="Saunders E."/>
            <person name="Brettin T."/>
            <person name="Bruce D."/>
            <person name="Han C."/>
            <person name="Tapia R."/>
            <person name="Gilna P."/>
            <person name="Schmutz J."/>
            <person name="Larimer F."/>
            <person name="Land M."/>
            <person name="Hauser L."/>
            <person name="Kyrpides N."/>
            <person name="Mikhailova N."/>
            <person name="Viollier P."/>
            <person name="Stephens C."/>
            <person name="Richardson P."/>
        </authorList>
    </citation>
    <scope>NUCLEOTIDE SEQUENCE [LARGE SCALE GENOMIC DNA]</scope>
    <source>
        <strain>MCS10</strain>
    </source>
</reference>
<accession>Q0AK79</accession>
<feature type="chain" id="PRO_0000374369" description="tRNA-2-methylthio-N(6)-dimethylallyladenosine synthase">
    <location>
        <begin position="1"/>
        <end position="456"/>
    </location>
</feature>
<feature type="domain" description="MTTase N-terminal" evidence="1">
    <location>
        <begin position="6"/>
        <end position="125"/>
    </location>
</feature>
<feature type="domain" description="Radical SAM core" evidence="2">
    <location>
        <begin position="149"/>
        <end position="385"/>
    </location>
</feature>
<feature type="domain" description="TRAM" evidence="1">
    <location>
        <begin position="388"/>
        <end position="450"/>
    </location>
</feature>
<feature type="binding site" evidence="1">
    <location>
        <position position="15"/>
    </location>
    <ligand>
        <name>[4Fe-4S] cluster</name>
        <dbReference type="ChEBI" id="CHEBI:49883"/>
        <label>1</label>
    </ligand>
</feature>
<feature type="binding site" evidence="1">
    <location>
        <position position="51"/>
    </location>
    <ligand>
        <name>[4Fe-4S] cluster</name>
        <dbReference type="ChEBI" id="CHEBI:49883"/>
        <label>1</label>
    </ligand>
</feature>
<feature type="binding site" evidence="1">
    <location>
        <position position="88"/>
    </location>
    <ligand>
        <name>[4Fe-4S] cluster</name>
        <dbReference type="ChEBI" id="CHEBI:49883"/>
        <label>1</label>
    </ligand>
</feature>
<feature type="binding site" evidence="1">
    <location>
        <position position="163"/>
    </location>
    <ligand>
        <name>[4Fe-4S] cluster</name>
        <dbReference type="ChEBI" id="CHEBI:49883"/>
        <label>2</label>
        <note>4Fe-4S-S-AdoMet</note>
    </ligand>
</feature>
<feature type="binding site" evidence="1">
    <location>
        <position position="167"/>
    </location>
    <ligand>
        <name>[4Fe-4S] cluster</name>
        <dbReference type="ChEBI" id="CHEBI:49883"/>
        <label>2</label>
        <note>4Fe-4S-S-AdoMet</note>
    </ligand>
</feature>
<feature type="binding site" evidence="1">
    <location>
        <position position="170"/>
    </location>
    <ligand>
        <name>[4Fe-4S] cluster</name>
        <dbReference type="ChEBI" id="CHEBI:49883"/>
        <label>2</label>
        <note>4Fe-4S-S-AdoMet</note>
    </ligand>
</feature>
<evidence type="ECO:0000255" key="1">
    <source>
        <dbReference type="HAMAP-Rule" id="MF_01864"/>
    </source>
</evidence>
<evidence type="ECO:0000255" key="2">
    <source>
        <dbReference type="PROSITE-ProRule" id="PRU01266"/>
    </source>
</evidence>
<organism>
    <name type="scientific">Maricaulis maris (strain MCS10)</name>
    <name type="common">Caulobacter maris</name>
    <dbReference type="NCBI Taxonomy" id="394221"/>
    <lineage>
        <taxon>Bacteria</taxon>
        <taxon>Pseudomonadati</taxon>
        <taxon>Pseudomonadota</taxon>
        <taxon>Alphaproteobacteria</taxon>
        <taxon>Maricaulales</taxon>
        <taxon>Maricaulaceae</taxon>
        <taxon>Maricaulis</taxon>
    </lineage>
</organism>
<keyword id="KW-0004">4Fe-4S</keyword>
<keyword id="KW-0963">Cytoplasm</keyword>
<keyword id="KW-0408">Iron</keyword>
<keyword id="KW-0411">Iron-sulfur</keyword>
<keyword id="KW-0479">Metal-binding</keyword>
<keyword id="KW-1185">Reference proteome</keyword>
<keyword id="KW-0949">S-adenosyl-L-methionine</keyword>
<keyword id="KW-0808">Transferase</keyword>
<keyword id="KW-0819">tRNA processing</keyword>
<comment type="function">
    <text evidence="1">Catalyzes the methylthiolation of N6-(dimethylallyl)adenosine (i(6)A), leading to the formation of 2-methylthio-N6-(dimethylallyl)adenosine (ms(2)i(6)A) at position 37 in tRNAs that read codons beginning with uridine.</text>
</comment>
<comment type="catalytic activity">
    <reaction evidence="1">
        <text>N(6)-dimethylallyladenosine(37) in tRNA + (sulfur carrier)-SH + AH2 + 2 S-adenosyl-L-methionine = 2-methylsulfanyl-N(6)-dimethylallyladenosine(37) in tRNA + (sulfur carrier)-H + 5'-deoxyadenosine + L-methionine + A + S-adenosyl-L-homocysteine + 2 H(+)</text>
        <dbReference type="Rhea" id="RHEA:37067"/>
        <dbReference type="Rhea" id="RHEA-COMP:10375"/>
        <dbReference type="Rhea" id="RHEA-COMP:10376"/>
        <dbReference type="Rhea" id="RHEA-COMP:14737"/>
        <dbReference type="Rhea" id="RHEA-COMP:14739"/>
        <dbReference type="ChEBI" id="CHEBI:13193"/>
        <dbReference type="ChEBI" id="CHEBI:15378"/>
        <dbReference type="ChEBI" id="CHEBI:17319"/>
        <dbReference type="ChEBI" id="CHEBI:17499"/>
        <dbReference type="ChEBI" id="CHEBI:29917"/>
        <dbReference type="ChEBI" id="CHEBI:57844"/>
        <dbReference type="ChEBI" id="CHEBI:57856"/>
        <dbReference type="ChEBI" id="CHEBI:59789"/>
        <dbReference type="ChEBI" id="CHEBI:64428"/>
        <dbReference type="ChEBI" id="CHEBI:74415"/>
        <dbReference type="ChEBI" id="CHEBI:74417"/>
        <dbReference type="EC" id="2.8.4.3"/>
    </reaction>
</comment>
<comment type="cofactor">
    <cofactor evidence="1">
        <name>[4Fe-4S] cluster</name>
        <dbReference type="ChEBI" id="CHEBI:49883"/>
    </cofactor>
    <text evidence="1">Binds 2 [4Fe-4S] clusters. One cluster is coordinated with 3 cysteines and an exchangeable S-adenosyl-L-methionine.</text>
</comment>
<comment type="subunit">
    <text evidence="1">Monomer.</text>
</comment>
<comment type="subcellular location">
    <subcellularLocation>
        <location evidence="1">Cytoplasm</location>
    </subcellularLocation>
</comment>
<comment type="similarity">
    <text evidence="1">Belongs to the methylthiotransferase family. MiaB subfamily.</text>
</comment>
<dbReference type="EC" id="2.8.4.3" evidence="1"/>
<dbReference type="EMBL" id="CP000449">
    <property type="protein sequence ID" value="ABI67314.1"/>
    <property type="molecule type" value="Genomic_DNA"/>
</dbReference>
<dbReference type="RefSeq" id="WP_011644958.1">
    <property type="nucleotide sequence ID" value="NC_008347.1"/>
</dbReference>
<dbReference type="SMR" id="Q0AK79"/>
<dbReference type="STRING" id="394221.Mmar10_3033"/>
<dbReference type="KEGG" id="mmr:Mmar10_3033"/>
<dbReference type="eggNOG" id="COG0621">
    <property type="taxonomic scope" value="Bacteria"/>
</dbReference>
<dbReference type="HOGENOM" id="CLU_018697_2_2_5"/>
<dbReference type="OrthoDB" id="9805215at2"/>
<dbReference type="Proteomes" id="UP000001964">
    <property type="component" value="Chromosome"/>
</dbReference>
<dbReference type="GO" id="GO:0005829">
    <property type="term" value="C:cytosol"/>
    <property type="evidence" value="ECO:0007669"/>
    <property type="project" value="TreeGrafter"/>
</dbReference>
<dbReference type="GO" id="GO:0051539">
    <property type="term" value="F:4 iron, 4 sulfur cluster binding"/>
    <property type="evidence" value="ECO:0007669"/>
    <property type="project" value="UniProtKB-UniRule"/>
</dbReference>
<dbReference type="GO" id="GO:0046872">
    <property type="term" value="F:metal ion binding"/>
    <property type="evidence" value="ECO:0007669"/>
    <property type="project" value="UniProtKB-KW"/>
</dbReference>
<dbReference type="GO" id="GO:0035597">
    <property type="term" value="F:N6-isopentenyladenosine methylthiotransferase activity"/>
    <property type="evidence" value="ECO:0007669"/>
    <property type="project" value="TreeGrafter"/>
</dbReference>
<dbReference type="CDD" id="cd01335">
    <property type="entry name" value="Radical_SAM"/>
    <property type="match status" value="1"/>
</dbReference>
<dbReference type="FunFam" id="3.40.50.12160:FF:000001">
    <property type="entry name" value="tRNA-2-methylthio-N(6)-dimethylallyladenosine synthase"/>
    <property type="match status" value="1"/>
</dbReference>
<dbReference type="FunFam" id="3.80.30.20:FF:000001">
    <property type="entry name" value="tRNA-2-methylthio-N(6)-dimethylallyladenosine synthase 2"/>
    <property type="match status" value="1"/>
</dbReference>
<dbReference type="Gene3D" id="3.40.50.12160">
    <property type="entry name" value="Methylthiotransferase, N-terminal domain"/>
    <property type="match status" value="1"/>
</dbReference>
<dbReference type="Gene3D" id="3.80.30.20">
    <property type="entry name" value="tm_1862 like domain"/>
    <property type="match status" value="1"/>
</dbReference>
<dbReference type="HAMAP" id="MF_01864">
    <property type="entry name" value="tRNA_metthiotr_MiaB"/>
    <property type="match status" value="1"/>
</dbReference>
<dbReference type="InterPro" id="IPR006638">
    <property type="entry name" value="Elp3/MiaA/NifB-like_rSAM"/>
</dbReference>
<dbReference type="InterPro" id="IPR005839">
    <property type="entry name" value="Methylthiotransferase"/>
</dbReference>
<dbReference type="InterPro" id="IPR020612">
    <property type="entry name" value="Methylthiotransferase_CS"/>
</dbReference>
<dbReference type="InterPro" id="IPR013848">
    <property type="entry name" value="Methylthiotransferase_N"/>
</dbReference>
<dbReference type="InterPro" id="IPR038135">
    <property type="entry name" value="Methylthiotransferase_N_sf"/>
</dbReference>
<dbReference type="InterPro" id="IPR006463">
    <property type="entry name" value="MiaB_methiolase"/>
</dbReference>
<dbReference type="InterPro" id="IPR007197">
    <property type="entry name" value="rSAM"/>
</dbReference>
<dbReference type="InterPro" id="IPR023404">
    <property type="entry name" value="rSAM_horseshoe"/>
</dbReference>
<dbReference type="InterPro" id="IPR002792">
    <property type="entry name" value="TRAM_dom"/>
</dbReference>
<dbReference type="NCBIfam" id="TIGR01574">
    <property type="entry name" value="miaB-methiolase"/>
    <property type="match status" value="1"/>
</dbReference>
<dbReference type="NCBIfam" id="TIGR00089">
    <property type="entry name" value="MiaB/RimO family radical SAM methylthiotransferase"/>
    <property type="match status" value="1"/>
</dbReference>
<dbReference type="PANTHER" id="PTHR43020">
    <property type="entry name" value="CDK5 REGULATORY SUBUNIT-ASSOCIATED PROTEIN 1"/>
    <property type="match status" value="1"/>
</dbReference>
<dbReference type="PANTHER" id="PTHR43020:SF2">
    <property type="entry name" value="MITOCHONDRIAL TRNA METHYLTHIOTRANSFERASE CDK5RAP1"/>
    <property type="match status" value="1"/>
</dbReference>
<dbReference type="Pfam" id="PF04055">
    <property type="entry name" value="Radical_SAM"/>
    <property type="match status" value="1"/>
</dbReference>
<dbReference type="Pfam" id="PF01938">
    <property type="entry name" value="TRAM"/>
    <property type="match status" value="1"/>
</dbReference>
<dbReference type="Pfam" id="PF00919">
    <property type="entry name" value="UPF0004"/>
    <property type="match status" value="1"/>
</dbReference>
<dbReference type="SFLD" id="SFLDF00273">
    <property type="entry name" value="(dimethylallyl)adenosine_tRNA"/>
    <property type="match status" value="1"/>
</dbReference>
<dbReference type="SFLD" id="SFLDG01082">
    <property type="entry name" value="B12-binding_domain_containing"/>
    <property type="match status" value="1"/>
</dbReference>
<dbReference type="SFLD" id="SFLDS00029">
    <property type="entry name" value="Radical_SAM"/>
    <property type="match status" value="1"/>
</dbReference>
<dbReference type="SMART" id="SM00729">
    <property type="entry name" value="Elp3"/>
    <property type="match status" value="1"/>
</dbReference>
<dbReference type="SUPFAM" id="SSF102114">
    <property type="entry name" value="Radical SAM enzymes"/>
    <property type="match status" value="1"/>
</dbReference>
<dbReference type="PROSITE" id="PS51449">
    <property type="entry name" value="MTTASE_N"/>
    <property type="match status" value="1"/>
</dbReference>
<dbReference type="PROSITE" id="PS01278">
    <property type="entry name" value="MTTASE_RADICAL"/>
    <property type="match status" value="1"/>
</dbReference>
<dbReference type="PROSITE" id="PS51918">
    <property type="entry name" value="RADICAL_SAM"/>
    <property type="match status" value="1"/>
</dbReference>
<dbReference type="PROSITE" id="PS50926">
    <property type="entry name" value="TRAM"/>
    <property type="match status" value="1"/>
</dbReference>
<protein>
    <recommendedName>
        <fullName evidence="1">tRNA-2-methylthio-N(6)-dimethylallyladenosine synthase</fullName>
        <ecNumber evidence="1">2.8.4.3</ecNumber>
    </recommendedName>
    <alternativeName>
        <fullName evidence="1">(Dimethylallyl)adenosine tRNA methylthiotransferase MiaB</fullName>
    </alternativeName>
    <alternativeName>
        <fullName evidence="1">tRNA-i(6)A37 methylthiotransferase</fullName>
    </alternativeName>
</protein>
<name>MIAB_MARMM</name>
<gene>
    <name evidence="1" type="primary">miaB</name>
    <name type="ordered locus">Mmar10_3033</name>
</gene>
<proteinExistence type="inferred from homology"/>
<sequence>MSTTRKRLFIKTYGCQMNVYDSDRMKDVLTPLGYESAETPEGADLVILNTCHIREKAAEKVYSELGRLRPLKDEKAASGGMTIAVAGCVAQAEGAEIMKRAPVVDLVVGPQTYHKLPELIAQAHRAKGEALDTEFEVEDKFDRLGSDRQVEGYSAFVTVQEGCDKFCTFCVVPYTRGAEWSRPVDQIVAEIRALAAKGIREVTLLGQNVNAFHGAPPSGREAEGAWGLGQLVRHVALIGGIERIRFTTSHPRDMDEVLIQAFADTPKLMPYFHLPVQAGSDKILKSMNRQHTAEEYVAIIDRLRAARPDIAISGDMIVGFPGETDADFEATLDLVRRVKFASCFSFKYSKRPGTPGAAMFNQVDEGVKSARLAVLQELLSDQQAAFNESMIGRTLPVLFEKPGRMGGQLHGRSPYLQSVHVDGPAELIGQVGEVRIEAASRNSLSGSLTGSKRSAA</sequence>